<reference key="1">
    <citation type="journal article" date="1988" name="J. Mol. Evol.">
        <title>Characterization of a protamine gene from the chum salmon (Oncorhynchus keta).</title>
        <authorList>
            <person name="Moir R.D."/>
            <person name="Dixon G.H."/>
        </authorList>
    </citation>
    <scope>NUCLEOTIDE SEQUENCE [GENOMIC DNA]</scope>
</reference>
<reference key="2">
    <citation type="journal article" date="1969" name="Int. J. Protein Res.">
        <title>A new method for fractionation of protamines and the amino acid sequences of salmine and three components of iridine.</title>
        <authorList>
            <person name="Ando T."/>
            <person name="Watanabe S."/>
        </authorList>
    </citation>
    <scope>PROTEIN SEQUENCE OF 2-33</scope>
</reference>
<proteinExistence type="evidence at protein level"/>
<organism>
    <name type="scientific">Oncorhynchus keta</name>
    <name type="common">Chum salmon</name>
    <name type="synonym">Salmo keta</name>
    <dbReference type="NCBI Taxonomy" id="8018"/>
    <lineage>
        <taxon>Eukaryota</taxon>
        <taxon>Metazoa</taxon>
        <taxon>Chordata</taxon>
        <taxon>Craniata</taxon>
        <taxon>Vertebrata</taxon>
        <taxon>Euteleostomi</taxon>
        <taxon>Actinopterygii</taxon>
        <taxon>Neopterygii</taxon>
        <taxon>Teleostei</taxon>
        <taxon>Protacanthopterygii</taxon>
        <taxon>Salmoniformes</taxon>
        <taxon>Salmonidae</taxon>
        <taxon>Salmoninae</taxon>
        <taxon>Oncorhynchus</taxon>
    </lineage>
</organism>
<comment type="function">
    <text>Protamines substitute for histones in the chromatin of sperm during the haploid phase of spermatogenesis. They compact sperm DNA into a highly condensed, stable and inactive complex.</text>
</comment>
<comment type="subcellular location">
    <subcellularLocation>
        <location>Nucleus</location>
    </subcellularLocation>
    <subcellularLocation>
        <location>Chromosome</location>
    </subcellularLocation>
</comment>
<comment type="tissue specificity">
    <text>Testis.</text>
</comment>
<feature type="initiator methionine" description="Removed" evidence="2">
    <location>
        <position position="1"/>
    </location>
</feature>
<feature type="peptide" id="PRO_0000044836" description="Protamine">
    <location>
        <begin position="2"/>
        <end position="33"/>
    </location>
</feature>
<feature type="region of interest" description="Disordered" evidence="1">
    <location>
        <begin position="1"/>
        <end position="33"/>
    </location>
</feature>
<name>PRT1_ONCKE</name>
<sequence length="33" mass="4381">MPRRRRSSSRPVRRRRRPRVSRRRRRRGGRRRR</sequence>
<dbReference type="EMBL" id="X07511">
    <property type="protein sequence ID" value="CAA30391.1"/>
    <property type="molecule type" value="Genomic_DNA"/>
</dbReference>
<dbReference type="PIR" id="A02669">
    <property type="entry name" value="SLONA1"/>
</dbReference>
<dbReference type="PIR" id="S00710">
    <property type="entry name" value="S00710"/>
</dbReference>
<dbReference type="GO" id="GO:0000786">
    <property type="term" value="C:nucleosome"/>
    <property type="evidence" value="ECO:0007669"/>
    <property type="project" value="UniProtKB-KW"/>
</dbReference>
<dbReference type="GO" id="GO:0005634">
    <property type="term" value="C:nucleus"/>
    <property type="evidence" value="ECO:0007669"/>
    <property type="project" value="UniProtKB-SubCell"/>
</dbReference>
<dbReference type="GO" id="GO:0003677">
    <property type="term" value="F:DNA binding"/>
    <property type="evidence" value="ECO:0007669"/>
    <property type="project" value="UniProtKB-KW"/>
</dbReference>
<dbReference type="GO" id="GO:0030154">
    <property type="term" value="P:cell differentiation"/>
    <property type="evidence" value="ECO:0007669"/>
    <property type="project" value="UniProtKB-KW"/>
</dbReference>
<dbReference type="GO" id="GO:0030261">
    <property type="term" value="P:chromosome condensation"/>
    <property type="evidence" value="ECO:0007669"/>
    <property type="project" value="UniProtKB-KW"/>
</dbReference>
<dbReference type="GO" id="GO:0007283">
    <property type="term" value="P:spermatogenesis"/>
    <property type="evidence" value="ECO:0007669"/>
    <property type="project" value="UniProtKB-KW"/>
</dbReference>
<keyword id="KW-0158">Chromosome</keyword>
<keyword id="KW-0217">Developmental protein</keyword>
<keyword id="KW-0221">Differentiation</keyword>
<keyword id="KW-0903">Direct protein sequencing</keyword>
<keyword id="KW-0226">DNA condensation</keyword>
<keyword id="KW-0238">DNA-binding</keyword>
<keyword id="KW-0544">Nucleosome core</keyword>
<keyword id="KW-0539">Nucleus</keyword>
<keyword id="KW-0744">Spermatogenesis</keyword>
<evidence type="ECO:0000256" key="1">
    <source>
        <dbReference type="SAM" id="MobiDB-lite"/>
    </source>
</evidence>
<evidence type="ECO:0000269" key="2">
    <source>
    </source>
</evidence>
<accession>P69014</accession>
<accession>P02327</accession>
<protein>
    <recommendedName>
        <fullName>Protamine</fullName>
    </recommendedName>
    <alternativeName>
        <fullName>Salmine-AI</fullName>
    </alternativeName>
</protein>